<accession>Q99W56</accession>
<sequence length="321" mass="36053">MKKIMITGALGQIGTELVVKCREIYGTDNVLATDIREPEADSPVQNGPFEILDVTDRDRMFELVRDFEADSLMHMAALLSATAEKNPILAWDLNMGGLMNALEAARTYNLHFFTPSSIGAFGDSTPKVNTPQVTIQQPTTMYGVNKVAGELLCQYYFKRFGVDTRSVRFPGLISHVKEPGGGTTDYAVEIYFKAVREGHYTSFIDKGTYMDMMYMDDAIEAIIKLMEADDAKLETRNGYNLSAMSFDPEMVKEAIQEYYPNFTLDYDVDPIRQGIANSWPDSIDTSCSRGEWGFDPKYDLASMTKLMLEAIEQKDTVKNNN</sequence>
<evidence type="ECO:0000305" key="1"/>
<gene>
    <name type="ordered locus">SAV0553</name>
</gene>
<reference key="1">
    <citation type="journal article" date="2001" name="Lancet">
        <title>Whole genome sequencing of meticillin-resistant Staphylococcus aureus.</title>
        <authorList>
            <person name="Kuroda M."/>
            <person name="Ohta T."/>
            <person name="Uchiyama I."/>
            <person name="Baba T."/>
            <person name="Yuzawa H."/>
            <person name="Kobayashi I."/>
            <person name="Cui L."/>
            <person name="Oguchi A."/>
            <person name="Aoki K."/>
            <person name="Nagai Y."/>
            <person name="Lian J.-Q."/>
            <person name="Ito T."/>
            <person name="Kanamori M."/>
            <person name="Matsumaru H."/>
            <person name="Maruyama A."/>
            <person name="Murakami H."/>
            <person name="Hosoyama A."/>
            <person name="Mizutani-Ui Y."/>
            <person name="Takahashi N.K."/>
            <person name="Sawano T."/>
            <person name="Inoue R."/>
            <person name="Kaito C."/>
            <person name="Sekimizu K."/>
            <person name="Hirakawa H."/>
            <person name="Kuhara S."/>
            <person name="Goto S."/>
            <person name="Yabuzaki J."/>
            <person name="Kanehisa M."/>
            <person name="Yamashita A."/>
            <person name="Oshima K."/>
            <person name="Furuya K."/>
            <person name="Yoshino C."/>
            <person name="Shiba T."/>
            <person name="Hattori M."/>
            <person name="Ogasawara N."/>
            <person name="Hayashi H."/>
            <person name="Hiramatsu K."/>
        </authorList>
    </citation>
    <scope>NUCLEOTIDE SEQUENCE [LARGE SCALE GENOMIC DNA]</scope>
    <source>
        <strain>Mu50 / ATCC 700699</strain>
    </source>
</reference>
<protein>
    <recommendedName>
        <fullName>Uncharacterized epimerase/dehydratase SAV0553</fullName>
    </recommendedName>
</protein>
<name>Y553_STAAM</name>
<organism>
    <name type="scientific">Staphylococcus aureus (strain Mu50 / ATCC 700699)</name>
    <dbReference type="NCBI Taxonomy" id="158878"/>
    <lineage>
        <taxon>Bacteria</taxon>
        <taxon>Bacillati</taxon>
        <taxon>Bacillota</taxon>
        <taxon>Bacilli</taxon>
        <taxon>Bacillales</taxon>
        <taxon>Staphylococcaceae</taxon>
        <taxon>Staphylococcus</taxon>
    </lineage>
</organism>
<feature type="chain" id="PRO_0000270846" description="Uncharacterized epimerase/dehydratase SAV0553">
    <location>
        <begin position="1"/>
        <end position="321"/>
    </location>
</feature>
<comment type="similarity">
    <text evidence="1">Belongs to the NAD(P)-dependent epimerase/dehydratase family.</text>
</comment>
<dbReference type="EMBL" id="BA000017">
    <property type="protein sequence ID" value="BAB56715.1"/>
    <property type="molecule type" value="Genomic_DNA"/>
</dbReference>
<dbReference type="RefSeq" id="WP_000723301.1">
    <property type="nucleotide sequence ID" value="NC_002758.2"/>
</dbReference>
<dbReference type="SMR" id="Q99W56"/>
<dbReference type="KEGG" id="sav:SAV0553"/>
<dbReference type="HOGENOM" id="CLU_007383_19_1_9"/>
<dbReference type="PhylomeDB" id="Q99W56"/>
<dbReference type="Proteomes" id="UP000002481">
    <property type="component" value="Chromosome"/>
</dbReference>
<dbReference type="GO" id="GO:0008743">
    <property type="term" value="F:L-threonine 3-dehydrogenase activity"/>
    <property type="evidence" value="ECO:0007669"/>
    <property type="project" value="TreeGrafter"/>
</dbReference>
<dbReference type="GO" id="GO:0006567">
    <property type="term" value="P:threonine catabolic process"/>
    <property type="evidence" value="ECO:0007669"/>
    <property type="project" value="TreeGrafter"/>
</dbReference>
<dbReference type="FunFam" id="3.40.50.720:FF:000077">
    <property type="entry name" value="L-threonine 3-dehydrogenase, mitochondrial"/>
    <property type="match status" value="1"/>
</dbReference>
<dbReference type="Gene3D" id="3.40.50.720">
    <property type="entry name" value="NAD(P)-binding Rossmann-like Domain"/>
    <property type="match status" value="1"/>
</dbReference>
<dbReference type="InterPro" id="IPR001509">
    <property type="entry name" value="Epimerase_deHydtase"/>
</dbReference>
<dbReference type="InterPro" id="IPR036291">
    <property type="entry name" value="NAD(P)-bd_dom_sf"/>
</dbReference>
<dbReference type="InterPro" id="IPR051225">
    <property type="entry name" value="NAD(P)_epim/dehydratase"/>
</dbReference>
<dbReference type="PANTHER" id="PTHR42687">
    <property type="entry name" value="L-THREONINE 3-DEHYDROGENASE"/>
    <property type="match status" value="1"/>
</dbReference>
<dbReference type="PANTHER" id="PTHR42687:SF1">
    <property type="entry name" value="L-THREONINE 3-DEHYDROGENASE, MITOCHONDRIAL"/>
    <property type="match status" value="1"/>
</dbReference>
<dbReference type="Pfam" id="PF01370">
    <property type="entry name" value="Epimerase"/>
    <property type="match status" value="1"/>
</dbReference>
<dbReference type="SUPFAM" id="SSF51735">
    <property type="entry name" value="NAD(P)-binding Rossmann-fold domains"/>
    <property type="match status" value="1"/>
</dbReference>
<proteinExistence type="inferred from homology"/>